<reference evidence="7" key="1">
    <citation type="journal article" date="2006" name="Mol. Cell. Proteomics">
        <title>Identification and characterization of new protein chemoattractants in the frog skin secretome.</title>
        <authorList>
            <person name="Leroy B."/>
            <person name="Toubeau G."/>
            <person name="Falmagne P."/>
            <person name="Wattiez R."/>
        </authorList>
    </citation>
    <scope>PROTEIN SEQUENCE</scope>
    <scope>SUBCELLULAR LOCATION</scope>
    <scope>TISSUE SPECIFICITY</scope>
    <scope>MASS SPECTROMETRY</scope>
    <scope>CALCIUM-BINDING</scope>
    <source>
        <tissue evidence="5">Skin secretion</tissue>
    </source>
</reference>
<feature type="chain" id="PRO_0000073600" description="Parvalbumin alpha">
    <location>
        <begin position="1"/>
        <end position="63" status="greater than"/>
    </location>
</feature>
<feature type="domain" description="EF-hand 1" evidence="3">
    <location>
        <begin position="28" status="less than"/>
        <end position="38" status="greater than"/>
    </location>
</feature>
<feature type="domain" description="EF-hand 2" evidence="3">
    <location>
        <begin position="39" status="less than"/>
        <end position="63" status="greater than"/>
    </location>
</feature>
<feature type="binding site" evidence="1">
    <location>
        <position position="29"/>
    </location>
    <ligand>
        <name>Ca(2+)</name>
        <dbReference type="ChEBI" id="CHEBI:29108"/>
        <label>1</label>
    </ligand>
</feature>
<feature type="binding site" evidence="7">
    <location>
        <position position="32"/>
    </location>
    <ligand>
        <name>Ca(2+)</name>
        <dbReference type="ChEBI" id="CHEBI:29108"/>
        <label>1</label>
    </ligand>
</feature>
<feature type="binding site" evidence="4">
    <location>
        <position position="45"/>
    </location>
    <ligand>
        <name>Ca(2+)</name>
        <dbReference type="ChEBI" id="CHEBI:29108"/>
        <label>2</label>
    </ligand>
</feature>
<feature type="binding site" evidence="4">
    <location>
        <position position="47"/>
    </location>
    <ligand>
        <name>Ca(2+)</name>
        <dbReference type="ChEBI" id="CHEBI:29108"/>
        <label>2</label>
    </ligand>
</feature>
<feature type="binding site" evidence="4">
    <location>
        <position position="49"/>
    </location>
    <ligand>
        <name>Ca(2+)</name>
        <dbReference type="ChEBI" id="CHEBI:29108"/>
        <label>2</label>
    </ligand>
</feature>
<feature type="binding site" evidence="4">
    <location>
        <position position="51"/>
    </location>
    <ligand>
        <name>Ca(2+)</name>
        <dbReference type="ChEBI" id="CHEBI:29108"/>
        <label>2</label>
    </ligand>
</feature>
<feature type="binding site" evidence="4">
    <location>
        <position position="56"/>
    </location>
    <ligand>
        <name>Ca(2+)</name>
        <dbReference type="ChEBI" id="CHEBI:29108"/>
        <label>2</label>
    </ligand>
</feature>
<feature type="non-consecutive residues" evidence="6">
    <location>
        <begin position="27"/>
        <end position="28"/>
    </location>
</feature>
<feature type="non-consecutive residues" evidence="6">
    <location>
        <begin position="38"/>
        <end position="39"/>
    </location>
</feature>
<feature type="non-terminal residue" evidence="6">
    <location>
        <position position="63"/>
    </location>
</feature>
<evidence type="ECO:0000250" key="1">
    <source>
        <dbReference type="UniProtKB" id="P02628"/>
    </source>
</evidence>
<evidence type="ECO:0000255" key="2"/>
<evidence type="ECO:0000255" key="3">
    <source>
        <dbReference type="PROSITE-ProRule" id="PRU00448"/>
    </source>
</evidence>
<evidence type="ECO:0000255" key="4">
    <source>
        <dbReference type="PROSITE-ProRule" id="PRU10142"/>
    </source>
</evidence>
<evidence type="ECO:0000269" key="5">
    <source>
    </source>
</evidence>
<evidence type="ECO:0000303" key="6">
    <source>
    </source>
</evidence>
<evidence type="ECO:0000305" key="7"/>
<accession>P84535</accession>
<sequence>PMTDVLAAGDISKAVAAFAAPESFNHKIEEEELGLILKVLLAAGDKDGDGKIGVDEFVTLVSE</sequence>
<dbReference type="SMR" id="P84535"/>
<dbReference type="GO" id="GO:0005737">
    <property type="term" value="C:cytoplasm"/>
    <property type="evidence" value="ECO:0007669"/>
    <property type="project" value="UniProtKB-SubCell"/>
</dbReference>
<dbReference type="GO" id="GO:0005576">
    <property type="term" value="C:extracellular region"/>
    <property type="evidence" value="ECO:0007669"/>
    <property type="project" value="UniProtKB-SubCell"/>
</dbReference>
<dbReference type="GO" id="GO:0046872">
    <property type="term" value="F:metal ion binding"/>
    <property type="evidence" value="ECO:0007669"/>
    <property type="project" value="UniProtKB-KW"/>
</dbReference>
<dbReference type="Gene3D" id="1.10.238.10">
    <property type="entry name" value="EF-hand"/>
    <property type="match status" value="1"/>
</dbReference>
<dbReference type="InterPro" id="IPR011992">
    <property type="entry name" value="EF-hand-dom_pair"/>
</dbReference>
<dbReference type="InterPro" id="IPR018247">
    <property type="entry name" value="EF_Hand_1_Ca_BS"/>
</dbReference>
<dbReference type="SUPFAM" id="SSF47473">
    <property type="entry name" value="EF-hand"/>
    <property type="match status" value="1"/>
</dbReference>
<dbReference type="PROSITE" id="PS00018">
    <property type="entry name" value="EF_HAND_1"/>
    <property type="match status" value="1"/>
</dbReference>
<keyword id="KW-0106">Calcium</keyword>
<keyword id="KW-0963">Cytoplasm</keyword>
<keyword id="KW-0903">Direct protein sequencing</keyword>
<keyword id="KW-0479">Metal-binding</keyword>
<keyword id="KW-0677">Repeat</keyword>
<keyword id="KW-0964">Secreted</keyword>
<proteinExistence type="evidence at protein level"/>
<organism>
    <name type="scientific">Rana temporaria</name>
    <name type="common">European common frog</name>
    <dbReference type="NCBI Taxonomy" id="8407"/>
    <lineage>
        <taxon>Eukaryota</taxon>
        <taxon>Metazoa</taxon>
        <taxon>Chordata</taxon>
        <taxon>Craniata</taxon>
        <taxon>Vertebrata</taxon>
        <taxon>Euteleostomi</taxon>
        <taxon>Amphibia</taxon>
        <taxon>Batrachia</taxon>
        <taxon>Anura</taxon>
        <taxon>Neobatrachia</taxon>
        <taxon>Ranoidea</taxon>
        <taxon>Ranidae</taxon>
        <taxon>Rana</taxon>
        <taxon>Rana</taxon>
    </lineage>
</organism>
<comment type="function">
    <text>In muscle, parvalbumin is thought to be involved in relaxation after contraction. It binds two calcium ions.</text>
</comment>
<comment type="subcellular location">
    <subcellularLocation>
        <location evidence="5">Cytoplasm</location>
    </subcellularLocation>
    <subcellularLocation>
        <location evidence="5">Secreted</location>
    </subcellularLocation>
    <text evidence="5">Cytoplasmic in muscle. Secreted in cutaneous mucus.</text>
</comment>
<comment type="tissue specificity">
    <text evidence="5">Detected in muscle and cutaneous mucus. In the skin, detected in cells in the basal region of the glandular epithelium of the dermal mucus glands (at protein level).</text>
</comment>
<comment type="mass spectrometry"/>
<comment type="similarity">
    <text evidence="2">Belongs to the parvalbumin family.</text>
</comment>
<name>PRVA_RANTE</name>
<protein>
    <recommendedName>
        <fullName evidence="6">Parvalbumin alpha</fullName>
    </recommendedName>
</protein>